<accession>Q9NZK7</accession>
<accession>Q5VXJ8</accession>
<organism>
    <name type="scientific">Homo sapiens</name>
    <name type="common">Human</name>
    <dbReference type="NCBI Taxonomy" id="9606"/>
    <lineage>
        <taxon>Eukaryota</taxon>
        <taxon>Metazoa</taxon>
        <taxon>Chordata</taxon>
        <taxon>Craniata</taxon>
        <taxon>Vertebrata</taxon>
        <taxon>Euteleostomi</taxon>
        <taxon>Mammalia</taxon>
        <taxon>Eutheria</taxon>
        <taxon>Euarchontoglires</taxon>
        <taxon>Primates</taxon>
        <taxon>Haplorrhini</taxon>
        <taxon>Catarrhini</taxon>
        <taxon>Hominidae</taxon>
        <taxon>Homo</taxon>
    </lineage>
</organism>
<dbReference type="EC" id="3.1.1.4" evidence="4 6"/>
<dbReference type="EMBL" id="AF189279">
    <property type="protein sequence ID" value="AAF36541.1"/>
    <property type="molecule type" value="mRNA"/>
</dbReference>
<dbReference type="EMBL" id="AL358253">
    <property type="status" value="NOT_ANNOTATED_CDS"/>
    <property type="molecule type" value="Genomic_DNA"/>
</dbReference>
<dbReference type="CCDS" id="CCDS200.1"/>
<dbReference type="RefSeq" id="NP_055404.1">
    <property type="nucleotide sequence ID" value="NM_014589.3"/>
</dbReference>
<dbReference type="PDB" id="5WZM">
    <property type="method" value="X-ray"/>
    <property type="resolution" value="2.00 A"/>
    <property type="chains" value="A=22-142"/>
</dbReference>
<dbReference type="PDB" id="5WZO">
    <property type="method" value="X-ray"/>
    <property type="resolution" value="1.90 A"/>
    <property type="chains" value="A=20-142"/>
</dbReference>
<dbReference type="PDB" id="5WZS">
    <property type="method" value="X-ray"/>
    <property type="resolution" value="2.30 A"/>
    <property type="chains" value="A=20-142"/>
</dbReference>
<dbReference type="PDB" id="5WZT">
    <property type="method" value="X-ray"/>
    <property type="resolution" value="2.40 A"/>
    <property type="chains" value="A=20-142"/>
</dbReference>
<dbReference type="PDB" id="5WZU">
    <property type="method" value="X-ray"/>
    <property type="resolution" value="2.20 A"/>
    <property type="chains" value="A=20-142"/>
</dbReference>
<dbReference type="PDB" id="5WZV">
    <property type="method" value="X-ray"/>
    <property type="resolution" value="2.20 A"/>
    <property type="chains" value="A=20-142"/>
</dbReference>
<dbReference type="PDB" id="5WZW">
    <property type="method" value="X-ray"/>
    <property type="resolution" value="1.95 A"/>
    <property type="chains" value="A=20-142"/>
</dbReference>
<dbReference type="PDB" id="5Y5E">
    <property type="method" value="X-ray"/>
    <property type="resolution" value="1.80 A"/>
    <property type="chains" value="A=20-142"/>
</dbReference>
<dbReference type="PDB" id="6KQU">
    <property type="method" value="X-ray"/>
    <property type="resolution" value="2.00 A"/>
    <property type="chains" value="A=20-142"/>
</dbReference>
<dbReference type="PDBsum" id="5WZM"/>
<dbReference type="PDBsum" id="5WZO"/>
<dbReference type="PDBsum" id="5WZS"/>
<dbReference type="PDBsum" id="5WZT"/>
<dbReference type="PDBsum" id="5WZU"/>
<dbReference type="PDBsum" id="5WZV"/>
<dbReference type="PDBsum" id="5WZW"/>
<dbReference type="PDBsum" id="5Y5E"/>
<dbReference type="PDBsum" id="6KQU"/>
<dbReference type="SMR" id="Q9NZK7"/>
<dbReference type="BioGRID" id="119038">
    <property type="interactions" value="15"/>
</dbReference>
<dbReference type="FunCoup" id="Q9NZK7">
    <property type="interactions" value="579"/>
</dbReference>
<dbReference type="IntAct" id="Q9NZK7">
    <property type="interactions" value="5"/>
</dbReference>
<dbReference type="STRING" id="9606.ENSP00000364257"/>
<dbReference type="BindingDB" id="Q9NZK7"/>
<dbReference type="ChEMBL" id="CHEMBL2154"/>
<dbReference type="DrugBank" id="DB07958">
    <property type="generic name" value="(2-CARBAMOYLMETHYL-5-PROPYL-OCTAHYDRO-INDOL-7-YL)ACETIC ACID"/>
</dbReference>
<dbReference type="DrugBank" id="DB07500">
    <property type="generic name" value="(2E)-1-[2-hydroxy-4-methoxy-5-(3-methylbut-2-en-1-yl)phenyl]-3-(4-hydroxyphenyl)prop-2-en-1-one"/>
</dbReference>
<dbReference type="DrugBank" id="DB06987">
    <property type="generic name" value="(R)-Atenolol"/>
</dbReference>
<dbReference type="DrugBank" id="DB01955">
    <property type="generic name" value="1,4-Butanediol"/>
</dbReference>
<dbReference type="DrugBank" id="DB08447">
    <property type="generic name" value="3-{3-[(DIMETHYLAMINO)METHYL]-1H-INDOL-7-YL}PROPAN-1-OL"/>
</dbReference>
<dbReference type="DrugBank" id="DB02636">
    <property type="generic name" value="9-Hydroxy-8-Methoxy-6-Nitro-Phenanthrol[3,4-D][1,3]Dioxole-5-Carboxylic Acid"/>
</dbReference>
<dbReference type="DrugBank" id="DB00233">
    <property type="generic name" value="Aminosalicylic acid"/>
</dbReference>
<dbReference type="DrugBank" id="DB09462">
    <property type="generic name" value="Glycerin"/>
</dbReference>
<dbReference type="DrugBank" id="DB07950">
    <property type="generic name" value="Indoleacetic acid"/>
</dbReference>
<dbReference type="DrugBank" id="DB02758">
    <property type="generic name" value="Indolepropionic acid"/>
</dbReference>
<dbReference type="DrugBank" id="DB04725">
    <property type="generic name" value="Licofelone"/>
</dbReference>
<dbReference type="DrugBank" id="DB02448">
    <property type="generic name" value="N-Tridecanoic Acid"/>
</dbReference>
<dbReference type="DrugBank" id="DB04743">
    <property type="generic name" value="Nimesulide"/>
</dbReference>
<dbReference type="DrugBank" id="DB03585">
    <property type="generic name" value="Oxyphenbutazone"/>
</dbReference>
<dbReference type="DrugBank" id="DB02795">
    <property type="generic name" value="P-Anisic Acid"/>
</dbReference>
<dbReference type="GuidetoPHARMACOLOGY" id="1419"/>
<dbReference type="SwissLipids" id="SLP:000001082"/>
<dbReference type="GlyGen" id="Q9NZK7">
    <property type="glycosylation" value="2 sites, 1 O-linked glycan (1 site)"/>
</dbReference>
<dbReference type="iPTMnet" id="Q9NZK7"/>
<dbReference type="PhosphoSitePlus" id="Q9NZK7"/>
<dbReference type="BioMuta" id="PLA2G2E"/>
<dbReference type="DMDM" id="20139240"/>
<dbReference type="PaxDb" id="9606-ENSP00000364257"/>
<dbReference type="PeptideAtlas" id="Q9NZK7"/>
<dbReference type="ProteomicsDB" id="83426"/>
<dbReference type="Antibodypedia" id="29744">
    <property type="antibodies" value="37 antibodies from 12 providers"/>
</dbReference>
<dbReference type="DNASU" id="30814"/>
<dbReference type="Ensembl" id="ENST00000375116.3">
    <property type="protein sequence ID" value="ENSP00000364257.3"/>
    <property type="gene ID" value="ENSG00000188784.4"/>
</dbReference>
<dbReference type="GeneID" id="30814"/>
<dbReference type="KEGG" id="hsa:30814"/>
<dbReference type="MANE-Select" id="ENST00000375116.3">
    <property type="protein sequence ID" value="ENSP00000364257.3"/>
    <property type="RefSeq nucleotide sequence ID" value="NM_014589.3"/>
    <property type="RefSeq protein sequence ID" value="NP_055404.1"/>
</dbReference>
<dbReference type="UCSC" id="uc001bct.2">
    <property type="organism name" value="human"/>
</dbReference>
<dbReference type="AGR" id="HGNC:13414"/>
<dbReference type="CTD" id="30814"/>
<dbReference type="DisGeNET" id="30814"/>
<dbReference type="GeneCards" id="PLA2G2E"/>
<dbReference type="HGNC" id="HGNC:13414">
    <property type="gene designation" value="PLA2G2E"/>
</dbReference>
<dbReference type="HPA" id="ENSG00000188784">
    <property type="expression patterns" value="Tissue enriched (lymphoid)"/>
</dbReference>
<dbReference type="MIM" id="618320">
    <property type="type" value="gene"/>
</dbReference>
<dbReference type="neXtProt" id="NX_Q9NZK7"/>
<dbReference type="OpenTargets" id="ENSG00000188784"/>
<dbReference type="PharmGKB" id="PA134889019"/>
<dbReference type="VEuPathDB" id="HostDB:ENSG00000188784"/>
<dbReference type="eggNOG" id="KOG4087">
    <property type="taxonomic scope" value="Eukaryota"/>
</dbReference>
<dbReference type="GeneTree" id="ENSGT00940000161504"/>
<dbReference type="HOGENOM" id="CLU_090683_3_0_1"/>
<dbReference type="InParanoid" id="Q9NZK7"/>
<dbReference type="OMA" id="IGGSHWP"/>
<dbReference type="OrthoDB" id="5841574at2759"/>
<dbReference type="PAN-GO" id="Q9NZK7">
    <property type="GO annotations" value="4 GO annotations based on evolutionary models"/>
</dbReference>
<dbReference type="PhylomeDB" id="Q9NZK7"/>
<dbReference type="TreeFam" id="TF319283"/>
<dbReference type="PathwayCommons" id="Q9NZK7"/>
<dbReference type="Reactome" id="R-HSA-1482788">
    <property type="pathway name" value="Acyl chain remodelling of PC"/>
</dbReference>
<dbReference type="Reactome" id="R-HSA-1482801">
    <property type="pathway name" value="Acyl chain remodelling of PS"/>
</dbReference>
<dbReference type="Reactome" id="R-HSA-1482839">
    <property type="pathway name" value="Acyl chain remodelling of PE"/>
</dbReference>
<dbReference type="Reactome" id="R-HSA-1482922">
    <property type="pathway name" value="Acyl chain remodelling of PI"/>
</dbReference>
<dbReference type="Reactome" id="R-HSA-1482925">
    <property type="pathway name" value="Acyl chain remodelling of PG"/>
</dbReference>
<dbReference type="Reactome" id="R-HSA-1483166">
    <property type="pathway name" value="Synthesis of PA"/>
</dbReference>
<dbReference type="SignaLink" id="Q9NZK7"/>
<dbReference type="BioGRID-ORCS" id="30814">
    <property type="hits" value="12 hits in 1152 CRISPR screens"/>
</dbReference>
<dbReference type="GenomeRNAi" id="30814"/>
<dbReference type="Pharos" id="Q9NZK7">
    <property type="development level" value="Tchem"/>
</dbReference>
<dbReference type="PRO" id="PR:Q9NZK7"/>
<dbReference type="Proteomes" id="UP000005640">
    <property type="component" value="Chromosome 1"/>
</dbReference>
<dbReference type="RNAct" id="Q9NZK7">
    <property type="molecule type" value="protein"/>
</dbReference>
<dbReference type="Bgee" id="ENSG00000188784">
    <property type="expression patterns" value="Expressed in tonsil and 17 other cell types or tissues"/>
</dbReference>
<dbReference type="GO" id="GO:0005737">
    <property type="term" value="C:cytoplasm"/>
    <property type="evidence" value="ECO:0007669"/>
    <property type="project" value="UniProtKB-SubCell"/>
</dbReference>
<dbReference type="GO" id="GO:0005576">
    <property type="term" value="C:extracellular region"/>
    <property type="evidence" value="ECO:0000304"/>
    <property type="project" value="Reactome"/>
</dbReference>
<dbReference type="GO" id="GO:0005509">
    <property type="term" value="F:calcium ion binding"/>
    <property type="evidence" value="ECO:0000314"/>
    <property type="project" value="UniProtKB"/>
</dbReference>
<dbReference type="GO" id="GO:0047498">
    <property type="term" value="F:calcium-dependent phospholipase A2 activity"/>
    <property type="evidence" value="ECO:0000314"/>
    <property type="project" value="UniProtKB"/>
</dbReference>
<dbReference type="GO" id="GO:0004623">
    <property type="term" value="F:phospholipase A2 activity"/>
    <property type="evidence" value="ECO:0000304"/>
    <property type="project" value="ProtInc"/>
</dbReference>
<dbReference type="GO" id="GO:0005543">
    <property type="term" value="F:phospholipid binding"/>
    <property type="evidence" value="ECO:0000318"/>
    <property type="project" value="GO_Central"/>
</dbReference>
<dbReference type="GO" id="GO:0050482">
    <property type="term" value="P:arachidonate secretion"/>
    <property type="evidence" value="ECO:0007669"/>
    <property type="project" value="InterPro"/>
</dbReference>
<dbReference type="GO" id="GO:0006954">
    <property type="term" value="P:inflammatory response"/>
    <property type="evidence" value="ECO:0000304"/>
    <property type="project" value="ProtInc"/>
</dbReference>
<dbReference type="GO" id="GO:0016042">
    <property type="term" value="P:lipid catabolic process"/>
    <property type="evidence" value="ECO:0007669"/>
    <property type="project" value="InterPro"/>
</dbReference>
<dbReference type="GO" id="GO:0034374">
    <property type="term" value="P:low-density lipoprotein particle remodeling"/>
    <property type="evidence" value="ECO:0007669"/>
    <property type="project" value="Ensembl"/>
</dbReference>
<dbReference type="GO" id="GO:0046470">
    <property type="term" value="P:phosphatidylcholine metabolic process"/>
    <property type="evidence" value="ECO:0000318"/>
    <property type="project" value="GO_Central"/>
</dbReference>
<dbReference type="GO" id="GO:0046471">
    <property type="term" value="P:phosphatidylglycerol metabolic process"/>
    <property type="evidence" value="ECO:0000318"/>
    <property type="project" value="GO_Central"/>
</dbReference>
<dbReference type="GO" id="GO:0006644">
    <property type="term" value="P:phospholipid metabolic process"/>
    <property type="evidence" value="ECO:0000304"/>
    <property type="project" value="ProtInc"/>
</dbReference>
<dbReference type="CDD" id="cd00125">
    <property type="entry name" value="PLA2c"/>
    <property type="match status" value="1"/>
</dbReference>
<dbReference type="FunFam" id="1.20.90.10:FF:000001">
    <property type="entry name" value="Basic phospholipase A2 homolog"/>
    <property type="match status" value="1"/>
</dbReference>
<dbReference type="Gene3D" id="1.20.90.10">
    <property type="entry name" value="Phospholipase A2 domain"/>
    <property type="match status" value="1"/>
</dbReference>
<dbReference type="InterPro" id="IPR001211">
    <property type="entry name" value="PLipase_A2"/>
</dbReference>
<dbReference type="InterPro" id="IPR016090">
    <property type="entry name" value="PLipase_A2_dom"/>
</dbReference>
<dbReference type="InterPro" id="IPR036444">
    <property type="entry name" value="PLipase_A2_dom_sf"/>
</dbReference>
<dbReference type="InterPro" id="IPR033113">
    <property type="entry name" value="PLipase_A2_His_AS"/>
</dbReference>
<dbReference type="PANTHER" id="PTHR11716:SF56">
    <property type="entry name" value="GROUP IIE SECRETORY PHOSPHOLIPASE A2"/>
    <property type="match status" value="1"/>
</dbReference>
<dbReference type="PANTHER" id="PTHR11716">
    <property type="entry name" value="PHOSPHOLIPASE A2 FAMILY MEMBER"/>
    <property type="match status" value="1"/>
</dbReference>
<dbReference type="Pfam" id="PF00068">
    <property type="entry name" value="Phospholip_A2_1"/>
    <property type="match status" value="1"/>
</dbReference>
<dbReference type="PRINTS" id="PR00389">
    <property type="entry name" value="PHPHLIPASEA2"/>
</dbReference>
<dbReference type="SMART" id="SM00085">
    <property type="entry name" value="PA2c"/>
    <property type="match status" value="1"/>
</dbReference>
<dbReference type="SUPFAM" id="SSF48619">
    <property type="entry name" value="Phospholipase A2, PLA2"/>
    <property type="match status" value="1"/>
</dbReference>
<dbReference type="PROSITE" id="PS00118">
    <property type="entry name" value="PA2_HIS"/>
    <property type="match status" value="1"/>
</dbReference>
<feature type="signal peptide" evidence="2">
    <location>
        <begin position="1"/>
        <end position="19"/>
    </location>
</feature>
<feature type="chain" id="PRO_0000022757" description="Group IIE secretory phospholipase A2">
    <location>
        <begin position="20"/>
        <end position="142"/>
    </location>
</feature>
<feature type="active site" evidence="3">
    <location>
        <position position="65"/>
    </location>
</feature>
<feature type="active site" evidence="3">
    <location>
        <position position="109"/>
    </location>
</feature>
<feature type="binding site" evidence="6 10">
    <location>
        <position position="41"/>
    </location>
    <ligand>
        <name>Ca(2+)</name>
        <dbReference type="ChEBI" id="CHEBI:29108"/>
        <label>2</label>
    </ligand>
</feature>
<feature type="binding site" evidence="6 10">
    <location>
        <position position="43"/>
    </location>
    <ligand>
        <name>Ca(2+)</name>
        <dbReference type="ChEBI" id="CHEBI:29108"/>
        <label>2</label>
    </ligand>
</feature>
<feature type="binding site" evidence="6 10">
    <location>
        <position position="45"/>
    </location>
    <ligand>
        <name>Ca(2+)</name>
        <dbReference type="ChEBI" id="CHEBI:29108"/>
        <label>1</label>
    </ligand>
</feature>
<feature type="binding site" evidence="6 10">
    <location>
        <position position="47"/>
    </location>
    <ligand>
        <name>Ca(2+)</name>
        <dbReference type="ChEBI" id="CHEBI:29108"/>
        <label>1</label>
    </ligand>
</feature>
<feature type="binding site" evidence="6 10">
    <location>
        <position position="49"/>
    </location>
    <ligand>
        <name>Ca(2+)</name>
        <dbReference type="ChEBI" id="CHEBI:29108"/>
        <label>1</label>
    </ligand>
</feature>
<feature type="binding site" evidence="6 10">
    <location>
        <position position="66"/>
    </location>
    <ligand>
        <name>Ca(2+)</name>
        <dbReference type="ChEBI" id="CHEBI:29108"/>
        <label>1</label>
    </ligand>
</feature>
<feature type="binding site" evidence="6 10">
    <location>
        <position position="130"/>
    </location>
    <ligand>
        <name>Ca(2+)</name>
        <dbReference type="ChEBI" id="CHEBI:29108"/>
        <label>2</label>
    </ligand>
</feature>
<feature type="binding site" evidence="6 10">
    <location>
        <position position="132"/>
    </location>
    <ligand>
        <name>Ca(2+)</name>
        <dbReference type="ChEBI" id="CHEBI:29108"/>
        <label>2</label>
    </ligand>
</feature>
<feature type="disulfide bond" evidence="6 10">
    <location>
        <begin position="44"/>
        <end position="135"/>
    </location>
</feature>
<feature type="disulfide bond" evidence="6 10">
    <location>
        <begin position="46"/>
        <end position="62"/>
    </location>
</feature>
<feature type="disulfide bond" evidence="6 10">
    <location>
        <begin position="61"/>
        <end position="115"/>
    </location>
</feature>
<feature type="disulfide bond" evidence="6 10">
    <location>
        <begin position="67"/>
        <end position="142"/>
    </location>
</feature>
<feature type="disulfide bond" evidence="6 10">
    <location>
        <begin position="68"/>
        <end position="108"/>
    </location>
</feature>
<feature type="disulfide bond" evidence="6 10">
    <location>
        <begin position="77"/>
        <end position="101"/>
    </location>
</feature>
<feature type="disulfide bond" evidence="6 10">
    <location>
        <begin position="95"/>
        <end position="106"/>
    </location>
</feature>
<feature type="mutagenesis site" description="Significantly decreases the catalytic efficiency." evidence="6">
    <original>N</original>
    <variation>G</variation>
    <variation>M</variation>
    <variation>W</variation>
    <location>
        <position position="40"/>
    </location>
</feature>
<feature type="mutagenesis site" description="Significantly decreases the catalytic efficiency." evidence="6">
    <original>D</original>
    <variation>A</variation>
    <variation>K</variation>
    <location>
        <position position="41"/>
    </location>
</feature>
<feature type="mutagenesis site" description="Loss of catalytic activity." evidence="6">
    <original>H</original>
    <variation>A</variation>
    <location>
        <position position="65"/>
    </location>
</feature>
<feature type="mutagenesis site" description="Loss of catalytic activity." evidence="6">
    <original>D</original>
    <variation>A</variation>
    <location>
        <position position="66"/>
    </location>
</feature>
<feature type="mutagenesis site" description="Significantly decreases the catalytic efficiency." evidence="6">
    <original>N</original>
    <variation>A</variation>
    <variation>K</variation>
    <location>
        <position position="132"/>
    </location>
</feature>
<feature type="helix" evidence="11">
    <location>
        <begin position="23"/>
        <end position="32"/>
    </location>
</feature>
<feature type="helix" evidence="11">
    <location>
        <begin position="36"/>
        <end position="38"/>
    </location>
</feature>
<feature type="turn" evidence="11">
    <location>
        <begin position="39"/>
        <end position="41"/>
    </location>
</feature>
<feature type="turn" evidence="11">
    <location>
        <begin position="43"/>
        <end position="45"/>
    </location>
</feature>
<feature type="strand" evidence="11">
    <location>
        <begin position="46"/>
        <end position="48"/>
    </location>
</feature>
<feature type="helix" evidence="11">
    <location>
        <begin position="57"/>
        <end position="74"/>
    </location>
</feature>
<feature type="turn" evidence="11">
    <location>
        <begin position="79"/>
        <end position="81"/>
    </location>
</feature>
<feature type="strand" evidence="11">
    <location>
        <begin position="85"/>
        <end position="89"/>
    </location>
</feature>
<feature type="strand" evidence="11">
    <location>
        <begin position="92"/>
        <end position="96"/>
    </location>
</feature>
<feature type="helix" evidence="11">
    <location>
        <begin position="100"/>
        <end position="118"/>
    </location>
</feature>
<feature type="helix" evidence="11">
    <location>
        <begin position="120"/>
        <end position="122"/>
    </location>
</feature>
<feature type="helix" evidence="11">
    <location>
        <begin position="125"/>
        <end position="127"/>
    </location>
</feature>
<feature type="helix" evidence="11">
    <location>
        <begin position="132"/>
        <end position="134"/>
    </location>
</feature>
<sequence length="142" mass="15989">MKSPHVLVFLCLLVALVTGNLVQFGVMIEKMTGKSALQYNDYGCYCGIGGSHWPVDQTDWCCHAHDCCYGRLEKLGCEPKLEKYLFSVSERGIFCAGRTTCQRLTCECDKRAALCFRRNLGTYNRKYAHYPNKLCTGPTPPC</sequence>
<protein>
    <recommendedName>
        <fullName>Group IIE secretory phospholipase A2</fullName>
        <shortName>GIIE sPLA2</shortName>
        <shortName>sPLA2-IIE</shortName>
        <ecNumber evidence="4 6">3.1.1.4</ecNumber>
    </recommendedName>
    <alternativeName>
        <fullName>Phosphatidylcholine 2-acylhydrolase 2E</fullName>
    </alternativeName>
</protein>
<reference key="1">
    <citation type="journal article" date="2000" name="J. Biol. Chem.">
        <title>Structures, enzymatic properties, and expression of novel human and mouse secretory phospholipase A(2)s.</title>
        <authorList>
            <person name="Suzuki N."/>
            <person name="Ishizaki J."/>
            <person name="Yokota Y."/>
            <person name="Higashino K."/>
            <person name="Ono T."/>
            <person name="Ikeda M."/>
            <person name="Fujii N."/>
            <person name="Kawamoto K."/>
            <person name="Hanasaki K."/>
        </authorList>
    </citation>
    <scope>NUCLEOTIDE SEQUENCE [MRNA]</scope>
    <scope>FUNCTION</scope>
    <scope>CATALYTIC ACTIVITY</scope>
    <scope>BIOPHYSICOCHEMICAL PROPERTIES</scope>
    <scope>TISSUE SPECIFICITY</scope>
    <scope>SUBCELLULAR LOCATION</scope>
</reference>
<reference key="2">
    <citation type="journal article" date="2006" name="Nature">
        <title>The DNA sequence and biological annotation of human chromosome 1.</title>
        <authorList>
            <person name="Gregory S.G."/>
            <person name="Barlow K.F."/>
            <person name="McLay K.E."/>
            <person name="Kaul R."/>
            <person name="Swarbreck D."/>
            <person name="Dunham A."/>
            <person name="Scott C.E."/>
            <person name="Howe K.L."/>
            <person name="Woodfine K."/>
            <person name="Spencer C.C.A."/>
            <person name="Jones M.C."/>
            <person name="Gillson C."/>
            <person name="Searle S."/>
            <person name="Zhou Y."/>
            <person name="Kokocinski F."/>
            <person name="McDonald L."/>
            <person name="Evans R."/>
            <person name="Phillips K."/>
            <person name="Atkinson A."/>
            <person name="Cooper R."/>
            <person name="Jones C."/>
            <person name="Hall R.E."/>
            <person name="Andrews T.D."/>
            <person name="Lloyd C."/>
            <person name="Ainscough R."/>
            <person name="Almeida J.P."/>
            <person name="Ambrose K.D."/>
            <person name="Anderson F."/>
            <person name="Andrew R.W."/>
            <person name="Ashwell R.I.S."/>
            <person name="Aubin K."/>
            <person name="Babbage A.K."/>
            <person name="Bagguley C.L."/>
            <person name="Bailey J."/>
            <person name="Beasley H."/>
            <person name="Bethel G."/>
            <person name="Bird C.P."/>
            <person name="Bray-Allen S."/>
            <person name="Brown J.Y."/>
            <person name="Brown A.J."/>
            <person name="Buckley D."/>
            <person name="Burton J."/>
            <person name="Bye J."/>
            <person name="Carder C."/>
            <person name="Chapman J.C."/>
            <person name="Clark S.Y."/>
            <person name="Clarke G."/>
            <person name="Clee C."/>
            <person name="Cobley V."/>
            <person name="Collier R.E."/>
            <person name="Corby N."/>
            <person name="Coville G.J."/>
            <person name="Davies J."/>
            <person name="Deadman R."/>
            <person name="Dunn M."/>
            <person name="Earthrowl M."/>
            <person name="Ellington A.G."/>
            <person name="Errington H."/>
            <person name="Frankish A."/>
            <person name="Frankland J."/>
            <person name="French L."/>
            <person name="Garner P."/>
            <person name="Garnett J."/>
            <person name="Gay L."/>
            <person name="Ghori M.R.J."/>
            <person name="Gibson R."/>
            <person name="Gilby L.M."/>
            <person name="Gillett W."/>
            <person name="Glithero R.J."/>
            <person name="Grafham D.V."/>
            <person name="Griffiths C."/>
            <person name="Griffiths-Jones S."/>
            <person name="Grocock R."/>
            <person name="Hammond S."/>
            <person name="Harrison E.S.I."/>
            <person name="Hart E."/>
            <person name="Haugen E."/>
            <person name="Heath P.D."/>
            <person name="Holmes S."/>
            <person name="Holt K."/>
            <person name="Howden P.J."/>
            <person name="Hunt A.R."/>
            <person name="Hunt S.E."/>
            <person name="Hunter G."/>
            <person name="Isherwood J."/>
            <person name="James R."/>
            <person name="Johnson C."/>
            <person name="Johnson D."/>
            <person name="Joy A."/>
            <person name="Kay M."/>
            <person name="Kershaw J.K."/>
            <person name="Kibukawa M."/>
            <person name="Kimberley A.M."/>
            <person name="King A."/>
            <person name="Knights A.J."/>
            <person name="Lad H."/>
            <person name="Laird G."/>
            <person name="Lawlor S."/>
            <person name="Leongamornlert D.A."/>
            <person name="Lloyd D.M."/>
            <person name="Loveland J."/>
            <person name="Lovell J."/>
            <person name="Lush M.J."/>
            <person name="Lyne R."/>
            <person name="Martin S."/>
            <person name="Mashreghi-Mohammadi M."/>
            <person name="Matthews L."/>
            <person name="Matthews N.S.W."/>
            <person name="McLaren S."/>
            <person name="Milne S."/>
            <person name="Mistry S."/>
            <person name="Moore M.J.F."/>
            <person name="Nickerson T."/>
            <person name="O'Dell C.N."/>
            <person name="Oliver K."/>
            <person name="Palmeiri A."/>
            <person name="Palmer S.A."/>
            <person name="Parker A."/>
            <person name="Patel D."/>
            <person name="Pearce A.V."/>
            <person name="Peck A.I."/>
            <person name="Pelan S."/>
            <person name="Phelps K."/>
            <person name="Phillimore B.J."/>
            <person name="Plumb R."/>
            <person name="Rajan J."/>
            <person name="Raymond C."/>
            <person name="Rouse G."/>
            <person name="Saenphimmachak C."/>
            <person name="Sehra H.K."/>
            <person name="Sheridan E."/>
            <person name="Shownkeen R."/>
            <person name="Sims S."/>
            <person name="Skuce C.D."/>
            <person name="Smith M."/>
            <person name="Steward C."/>
            <person name="Subramanian S."/>
            <person name="Sycamore N."/>
            <person name="Tracey A."/>
            <person name="Tromans A."/>
            <person name="Van Helmond Z."/>
            <person name="Wall M."/>
            <person name="Wallis J.M."/>
            <person name="White S."/>
            <person name="Whitehead S.L."/>
            <person name="Wilkinson J.E."/>
            <person name="Willey D.L."/>
            <person name="Williams H."/>
            <person name="Wilming L."/>
            <person name="Wray P.W."/>
            <person name="Wu Z."/>
            <person name="Coulson A."/>
            <person name="Vaudin M."/>
            <person name="Sulston J.E."/>
            <person name="Durbin R.M."/>
            <person name="Hubbard T."/>
            <person name="Wooster R."/>
            <person name="Dunham I."/>
            <person name="Carter N.P."/>
            <person name="McVean G."/>
            <person name="Ross M.T."/>
            <person name="Harrow J."/>
            <person name="Olson M.V."/>
            <person name="Beck S."/>
            <person name="Rogers J."/>
            <person name="Bentley D.R."/>
        </authorList>
    </citation>
    <scope>NUCLEOTIDE SEQUENCE [LARGE SCALE GENOMIC DNA]</scope>
</reference>
<reference key="3">
    <citation type="journal article" date="2002" name="Biochem. Biophys. Res. Commun.">
        <title>Arachidonate release and eicosanoid generation by group IIE phospholipase A(2).</title>
        <authorList>
            <person name="Murakami M."/>
            <person name="Yoshihara K."/>
            <person name="Shimbara S."/>
            <person name="Lambeau G."/>
            <person name="Singer A."/>
            <person name="Gelb M.H."/>
            <person name="Sawada M."/>
            <person name="Inagaki N."/>
            <person name="Nagai H."/>
            <person name="Kudo I."/>
        </authorList>
    </citation>
    <scope>FUNCTION</scope>
    <scope>CATALYTIC ACTIVITY</scope>
    <scope>SUBCELLULAR LOCATION</scope>
    <scope>INDUCTION BY IL1B</scope>
</reference>
<reference key="4">
    <citation type="journal article" date="2017" name="Sci. Rep.">
        <title>Structural basis for functional selectivity and ligand recognition revealed by crystal structures of human secreted phospholipase A2 group IIE.</title>
        <authorList>
            <person name="Hou S."/>
            <person name="Xu T."/>
            <person name="Xu J."/>
            <person name="Qu L."/>
            <person name="Xu Y."/>
            <person name="Chen L."/>
            <person name="Liu J."/>
        </authorList>
    </citation>
    <scope>X-RAY CRYSTALLOGRAPHY (1.80 ANGSTROMS) OF 20-142 IN COMPLEX WITH INDOLE ANALOGS</scope>
    <scope>COFACTOR</scope>
    <scope>DISULFIDE BOND</scope>
    <scope>FUNCTION</scope>
    <scope>CATALYTIC ACTIVITY</scope>
    <scope>MUTAGENESIS OF ASN-40; ASP-41; HIS-65; ASP-66 AND ASN-132</scope>
</reference>
<name>PA2GE_HUMAN</name>
<evidence type="ECO:0000250" key="1">
    <source>
        <dbReference type="UniProtKB" id="Q9QUL3"/>
    </source>
</evidence>
<evidence type="ECO:0000255" key="2"/>
<evidence type="ECO:0000255" key="3">
    <source>
        <dbReference type="PROSITE-ProRule" id="PRU10035"/>
    </source>
</evidence>
<evidence type="ECO:0000269" key="4">
    <source>
    </source>
</evidence>
<evidence type="ECO:0000269" key="5">
    <source>
    </source>
</evidence>
<evidence type="ECO:0000269" key="6">
    <source>
    </source>
</evidence>
<evidence type="ECO:0000305" key="7"/>
<evidence type="ECO:0000305" key="8">
    <source>
    </source>
</evidence>
<evidence type="ECO:0000305" key="9">
    <source>
    </source>
</evidence>
<evidence type="ECO:0007744" key="10">
    <source>
        <dbReference type="PDB" id="5WZM"/>
    </source>
</evidence>
<evidence type="ECO:0007829" key="11">
    <source>
        <dbReference type="PDB" id="5Y5E"/>
    </source>
</evidence>
<proteinExistence type="evidence at protein level"/>
<comment type="function">
    <text evidence="1 4 5 6">Secretory calcium-dependent phospholipase A2 that primarily targets extracellular phospholipids (PubMed:10681567, PubMed:11922621, PubMed:28883454). Hydrolyzes the ester bond of the fatty acyl group attached at sn-2 position of phospholipids (phospholipase A2 activity), releasing various unsaturated fatty acids including oleoate, linoleoate, arachidonate, docosahexaenoate and lysophosphatidylethanolamines in preference to lysophosphatidylcholines (PubMed:10681567, PubMed:28883454). In response to high-fat diet, hydrolyzes minor lipoprotein phospholipids including phosphatidylserines, phosphatidylinositols and phosphatidylglycerols, altering lipoprotein composition and fat storage in adipose tissue and liver (By similarity). May act in an autocrine and paracrine manner (PubMed:11922621). Contributes to lipid remodeling of cellular membranes and generation of lipid mediators involved in pathogen clearance. Cleaves sn-2 fatty acyl chains of phosphatidylglycerols and phosphatidylethanolamines, which are major components of membrane phospholipids in bacteria (PubMed:11922621). Acts as a hair follicle phospholipase A2. Selectively releases lysophosphatidylethanolamines (LPE) and various unsaturated fatty acids in skin to regulate hair follicle homeostasis (By similarity). May regulate the inflammatory response by releasing arachidonate, a precursor of prostaglandins and leukotrienes (PubMed:11922621). Upon allergen exposure, may participate in allergic inflammatory response by enhancing leukotriene C4 synthesis and degranulation in mast cells (By similarity).</text>
</comment>
<comment type="catalytic activity">
    <reaction evidence="4">
        <text>a 1,2-diacyl-sn-glycero-3-phosphoethanolamine + H2O = a 1-acyl-sn-glycero-3-phosphoethanolamine + a fatty acid + H(+)</text>
        <dbReference type="Rhea" id="RHEA:44604"/>
        <dbReference type="ChEBI" id="CHEBI:15377"/>
        <dbReference type="ChEBI" id="CHEBI:15378"/>
        <dbReference type="ChEBI" id="CHEBI:28868"/>
        <dbReference type="ChEBI" id="CHEBI:64381"/>
        <dbReference type="ChEBI" id="CHEBI:64612"/>
    </reaction>
</comment>
<comment type="catalytic activity">
    <reaction evidence="4">
        <text>1-hexadecanoyl-2-(9Z-octadecenoyl)-sn-glycero-3-phosphoethanolamine + H2O = 1-hexadecanoyl-sn-glycero-3-phosphoethanolamine + (9Z)-octadecenoate + H(+)</text>
        <dbReference type="Rhea" id="RHEA:40911"/>
        <dbReference type="ChEBI" id="CHEBI:15377"/>
        <dbReference type="ChEBI" id="CHEBI:15378"/>
        <dbReference type="ChEBI" id="CHEBI:30823"/>
        <dbReference type="ChEBI" id="CHEBI:73004"/>
        <dbReference type="ChEBI" id="CHEBI:73007"/>
    </reaction>
    <physiologicalReaction direction="left-to-right" evidence="8">
        <dbReference type="Rhea" id="RHEA:40912"/>
    </physiologicalReaction>
</comment>
<comment type="catalytic activity">
    <reaction evidence="4">
        <text>1-hexadecanoyl-2-(9Z,12Z-octadecadienoyl)-sn-glycero-3-phosphoethanolamine + H2O = 1-hexadecanoyl-sn-glycero-3-phosphoethanolamine + (9Z,12Z)-octadecadienoate + H(+)</text>
        <dbReference type="Rhea" id="RHEA:40815"/>
        <dbReference type="ChEBI" id="CHEBI:15377"/>
        <dbReference type="ChEBI" id="CHEBI:15378"/>
        <dbReference type="ChEBI" id="CHEBI:30245"/>
        <dbReference type="ChEBI" id="CHEBI:73004"/>
        <dbReference type="ChEBI" id="CHEBI:73008"/>
    </reaction>
    <physiologicalReaction direction="left-to-right" evidence="8">
        <dbReference type="Rhea" id="RHEA:40816"/>
    </physiologicalReaction>
</comment>
<comment type="catalytic activity">
    <reaction evidence="4 5">
        <text>1-hexadecanoyl-2-(5Z,8Z,11Z,14Z-eicosatetraenoyl)-sn-glycero-3-phosphoethanolamine + H2O = 1-hexadecanoyl-sn-glycero-3-phosphoethanolamine + (5Z,8Z,11Z,14Z)-eicosatetraenoate + H(+)</text>
        <dbReference type="Rhea" id="RHEA:40431"/>
        <dbReference type="ChEBI" id="CHEBI:15377"/>
        <dbReference type="ChEBI" id="CHEBI:15378"/>
        <dbReference type="ChEBI" id="CHEBI:32395"/>
        <dbReference type="ChEBI" id="CHEBI:73004"/>
        <dbReference type="ChEBI" id="CHEBI:73009"/>
    </reaction>
    <physiologicalReaction direction="left-to-right" evidence="8">
        <dbReference type="Rhea" id="RHEA:40432"/>
    </physiologicalReaction>
</comment>
<comment type="catalytic activity">
    <reaction evidence="4">
        <text>1,2-dihexadecanoyl-sn-glycero-3-phospho-(1'-sn-glycerol) + H2O = 1-hexadecanoyl-sn-glycero-3-phospho-(1'-sn-glycerol) + hexadecanoate + H(+)</text>
        <dbReference type="Rhea" id="RHEA:45472"/>
        <dbReference type="ChEBI" id="CHEBI:7896"/>
        <dbReference type="ChEBI" id="CHEBI:15377"/>
        <dbReference type="ChEBI" id="CHEBI:15378"/>
        <dbReference type="ChEBI" id="CHEBI:72829"/>
        <dbReference type="ChEBI" id="CHEBI:75158"/>
    </reaction>
    <physiologicalReaction direction="left-to-right" evidence="8">
        <dbReference type="Rhea" id="RHEA:45473"/>
    </physiologicalReaction>
</comment>
<comment type="catalytic activity">
    <reaction evidence="4">
        <text>1-hexadecanoyl-2-(9Z-octadecenoyl)-sn-glycero-3-phosphoglycerol + H2O = 1-hexadecanoyl-sn-glycero-3-phosphoglycerol + (9Z)-octadecenoate + H(+)</text>
        <dbReference type="Rhea" id="RHEA:44524"/>
        <dbReference type="ChEBI" id="CHEBI:15377"/>
        <dbReference type="ChEBI" id="CHEBI:15378"/>
        <dbReference type="ChEBI" id="CHEBI:30823"/>
        <dbReference type="ChEBI" id="CHEBI:84472"/>
        <dbReference type="ChEBI" id="CHEBI:84475"/>
    </reaction>
    <physiologicalReaction direction="left-to-right" evidence="8">
        <dbReference type="Rhea" id="RHEA:44525"/>
    </physiologicalReaction>
</comment>
<comment type="catalytic activity">
    <reaction evidence="3 4 6">
        <text>a 1,2-diacyl-sn-glycero-3-phosphocholine + H2O = a 1-acyl-sn-glycero-3-phosphocholine + a fatty acid + H(+)</text>
        <dbReference type="Rhea" id="RHEA:15801"/>
        <dbReference type="ChEBI" id="CHEBI:15377"/>
        <dbReference type="ChEBI" id="CHEBI:15378"/>
        <dbReference type="ChEBI" id="CHEBI:28868"/>
        <dbReference type="ChEBI" id="CHEBI:57643"/>
        <dbReference type="ChEBI" id="CHEBI:58168"/>
        <dbReference type="EC" id="3.1.1.4"/>
    </reaction>
    <physiologicalReaction direction="left-to-right" evidence="8 9">
        <dbReference type="Rhea" id="RHEA:15802"/>
    </physiologicalReaction>
</comment>
<comment type="catalytic activity">
    <reaction evidence="4">
        <text>1,2-dihexadecanoyl-sn-glycero-3-phosphocholine + H2O = 1-hexadecanoyl-sn-glycero-3-phosphocholine + hexadecanoate + H(+)</text>
        <dbReference type="Rhea" id="RHEA:41223"/>
        <dbReference type="ChEBI" id="CHEBI:7896"/>
        <dbReference type="ChEBI" id="CHEBI:15377"/>
        <dbReference type="ChEBI" id="CHEBI:15378"/>
        <dbReference type="ChEBI" id="CHEBI:72998"/>
        <dbReference type="ChEBI" id="CHEBI:72999"/>
    </reaction>
    <physiologicalReaction direction="left-to-right" evidence="8">
        <dbReference type="Rhea" id="RHEA:41224"/>
    </physiologicalReaction>
</comment>
<comment type="catalytic activity">
    <reaction evidence="4">
        <text>1-hexadecanoyl-2-(9Z-octadecenoyl)-sn-glycero-3-phosphocholine + H2O = 1-hexadecanoyl-sn-glycero-3-phosphocholine + (9Z)-octadecenoate + H(+)</text>
        <dbReference type="Rhea" id="RHEA:38779"/>
        <dbReference type="ChEBI" id="CHEBI:15377"/>
        <dbReference type="ChEBI" id="CHEBI:15378"/>
        <dbReference type="ChEBI" id="CHEBI:30823"/>
        <dbReference type="ChEBI" id="CHEBI:72998"/>
        <dbReference type="ChEBI" id="CHEBI:73001"/>
    </reaction>
    <physiologicalReaction direction="left-to-right" evidence="8">
        <dbReference type="Rhea" id="RHEA:38780"/>
    </physiologicalReaction>
</comment>
<comment type="catalytic activity">
    <reaction evidence="4">
        <text>1-hexadecanoyl-2-(9Z,12Z-octadecadienoyl)-sn-glycero-3-phosphocholine + H2O = (9Z,12Z)-octadecadienoate + 1-hexadecanoyl-sn-glycero-3-phosphocholine + H(+)</text>
        <dbReference type="Rhea" id="RHEA:40811"/>
        <dbReference type="ChEBI" id="CHEBI:15377"/>
        <dbReference type="ChEBI" id="CHEBI:15378"/>
        <dbReference type="ChEBI" id="CHEBI:30245"/>
        <dbReference type="ChEBI" id="CHEBI:72998"/>
        <dbReference type="ChEBI" id="CHEBI:73002"/>
    </reaction>
    <physiologicalReaction direction="left-to-right" evidence="8">
        <dbReference type="Rhea" id="RHEA:40812"/>
    </physiologicalReaction>
</comment>
<comment type="catalytic activity">
    <reaction evidence="4">
        <text>1-hexadecanoyl-2-(4Z,7Z,10Z,13Z,16Z,19Z-docosahexaenoyl)-sn-glycero-3-phosphocholine + H2O = (4Z,7Z,10Z,13Z,16Z,19Z)-docosahexaenoate + 1-hexadecanoyl-sn-glycero-3-phosphocholine + H(+)</text>
        <dbReference type="Rhea" id="RHEA:41231"/>
        <dbReference type="ChEBI" id="CHEBI:15377"/>
        <dbReference type="ChEBI" id="CHEBI:15378"/>
        <dbReference type="ChEBI" id="CHEBI:72998"/>
        <dbReference type="ChEBI" id="CHEBI:74963"/>
        <dbReference type="ChEBI" id="CHEBI:77016"/>
    </reaction>
    <physiologicalReaction direction="left-to-right" evidence="8">
        <dbReference type="Rhea" id="RHEA:41232"/>
    </physiologicalReaction>
</comment>
<comment type="cofactor">
    <cofactor evidence="6">
        <name>Ca(2+)</name>
        <dbReference type="ChEBI" id="CHEBI:29108"/>
    </cofactor>
    <text evidence="6">Binds 2 Ca(2+) ions per subunit. One ion binds at a conserved binding site (GCXCG), whereas the second ion binds at a flexible site and may act as a supplemental electrophile as well as a backup.</text>
</comment>
<comment type="biophysicochemical properties">
    <phDependence>
        <text evidence="4">Optimum pH is 7-9.</text>
    </phDependence>
</comment>
<comment type="interaction">
    <interactant intactId="EBI-13380620">
        <id>Q9NZK7</id>
    </interactant>
    <interactant intactId="EBI-750078">
        <id>Q13021</id>
        <label>MALL</label>
    </interactant>
    <organismsDiffer>false</organismsDiffer>
    <experiments>3</experiments>
</comment>
<comment type="subcellular location">
    <subcellularLocation>
        <location evidence="4 5">Secreted</location>
    </subcellularLocation>
    <subcellularLocation>
        <location evidence="5">Cytoplasm</location>
    </subcellularLocation>
    <text evidence="5">Through binding to heparan sulfate proteoglycan, may be localized to cytoplasmic compartments enriched in anionic phospholipids.</text>
</comment>
<comment type="tissue specificity">
    <text evidence="4">Restricted to the brain, heart, lung, and placenta.</text>
</comment>
<comment type="induction">
    <text evidence="5">Up-regulated by inflammatory cytokine IL1B.</text>
</comment>
<comment type="similarity">
    <text evidence="7">Belongs to the phospholipase A2 family.</text>
</comment>
<keyword id="KW-0002">3D-structure</keyword>
<keyword id="KW-0106">Calcium</keyword>
<keyword id="KW-0963">Cytoplasm</keyword>
<keyword id="KW-1015">Disulfide bond</keyword>
<keyword id="KW-0378">Hydrolase</keyword>
<keyword id="KW-0395">Inflammatory response</keyword>
<keyword id="KW-0443">Lipid metabolism</keyword>
<keyword id="KW-0479">Metal-binding</keyword>
<keyword id="KW-1208">Phospholipid metabolism</keyword>
<keyword id="KW-1185">Reference proteome</keyword>
<keyword id="KW-0964">Secreted</keyword>
<keyword id="KW-0732">Signal</keyword>
<gene>
    <name type="primary">PLA2G2E</name>
</gene>